<protein>
    <recommendedName>
        <fullName evidence="1">Ribosomal RNA small subunit methyltransferase J</fullName>
        <ecNumber evidence="1">2.1.1.242</ecNumber>
    </recommendedName>
    <alternativeName>
        <fullName evidence="1">16S rRNA m2G1516 methyltransferase</fullName>
    </alternativeName>
    <alternativeName>
        <fullName evidence="1">rRNA (guanine-N(2)-)-methyltransferase</fullName>
    </alternativeName>
</protein>
<comment type="function">
    <text evidence="1">Specifically methylates the guanosine in position 1516 of 16S rRNA.</text>
</comment>
<comment type="catalytic activity">
    <reaction evidence="1">
        <text>guanosine(1516) in 16S rRNA + S-adenosyl-L-methionine = N(2)-methylguanosine(1516) in 16S rRNA + S-adenosyl-L-homocysteine + H(+)</text>
        <dbReference type="Rhea" id="RHEA:43220"/>
        <dbReference type="Rhea" id="RHEA-COMP:10412"/>
        <dbReference type="Rhea" id="RHEA-COMP:10413"/>
        <dbReference type="ChEBI" id="CHEBI:15378"/>
        <dbReference type="ChEBI" id="CHEBI:57856"/>
        <dbReference type="ChEBI" id="CHEBI:59789"/>
        <dbReference type="ChEBI" id="CHEBI:74269"/>
        <dbReference type="ChEBI" id="CHEBI:74481"/>
        <dbReference type="EC" id="2.1.1.242"/>
    </reaction>
</comment>
<comment type="subcellular location">
    <subcellularLocation>
        <location evidence="1">Cytoplasm</location>
    </subcellularLocation>
</comment>
<comment type="similarity">
    <text evidence="1">Belongs to the methyltransferase superfamily. RsmJ family.</text>
</comment>
<dbReference type="EC" id="2.1.1.242" evidence="1"/>
<dbReference type="EMBL" id="CP000947">
    <property type="protein sequence ID" value="ACA31551.1"/>
    <property type="molecule type" value="Genomic_DNA"/>
</dbReference>
<dbReference type="RefSeq" id="WP_012340874.1">
    <property type="nucleotide sequence ID" value="NC_010519.1"/>
</dbReference>
<dbReference type="SMR" id="B0UVN8"/>
<dbReference type="STRING" id="228400.HSM_0177"/>
<dbReference type="GeneID" id="31486455"/>
<dbReference type="KEGG" id="hsm:HSM_0177"/>
<dbReference type="HOGENOM" id="CLU_076324_0_1_6"/>
<dbReference type="GO" id="GO:0005737">
    <property type="term" value="C:cytoplasm"/>
    <property type="evidence" value="ECO:0007669"/>
    <property type="project" value="UniProtKB-SubCell"/>
</dbReference>
<dbReference type="GO" id="GO:0008990">
    <property type="term" value="F:rRNA (guanine-N2-)-methyltransferase activity"/>
    <property type="evidence" value="ECO:0007669"/>
    <property type="project" value="UniProtKB-UniRule"/>
</dbReference>
<dbReference type="Gene3D" id="3.40.50.150">
    <property type="entry name" value="Vaccinia Virus protein VP39"/>
    <property type="match status" value="1"/>
</dbReference>
<dbReference type="Gene3D" id="3.40.1630.10">
    <property type="entry name" value="YhiQ-like domain"/>
    <property type="match status" value="1"/>
</dbReference>
<dbReference type="HAMAP" id="MF_01523">
    <property type="entry name" value="16SrRNA_methyltr_J"/>
    <property type="match status" value="1"/>
</dbReference>
<dbReference type="InterPro" id="IPR007536">
    <property type="entry name" value="16SrRNA_methylTrfase_J"/>
</dbReference>
<dbReference type="InterPro" id="IPR029063">
    <property type="entry name" value="SAM-dependent_MTases_sf"/>
</dbReference>
<dbReference type="PANTHER" id="PTHR36112">
    <property type="entry name" value="RIBOSOMAL RNA SMALL SUBUNIT METHYLTRANSFERASE J"/>
    <property type="match status" value="1"/>
</dbReference>
<dbReference type="PANTHER" id="PTHR36112:SF1">
    <property type="entry name" value="RIBOSOMAL RNA SMALL SUBUNIT METHYLTRANSFERASE J"/>
    <property type="match status" value="1"/>
</dbReference>
<dbReference type="Pfam" id="PF04445">
    <property type="entry name" value="SAM_MT"/>
    <property type="match status" value="1"/>
</dbReference>
<dbReference type="SUPFAM" id="SSF53335">
    <property type="entry name" value="S-adenosyl-L-methionine-dependent methyltransferases"/>
    <property type="match status" value="1"/>
</dbReference>
<evidence type="ECO:0000255" key="1">
    <source>
        <dbReference type="HAMAP-Rule" id="MF_01523"/>
    </source>
</evidence>
<accession>B0UVN8</accession>
<feature type="chain" id="PRO_0000383381" description="Ribosomal RNA small subunit methyltransferase J">
    <location>
        <begin position="1"/>
        <end position="254"/>
    </location>
</feature>
<feature type="binding site" evidence="1">
    <location>
        <begin position="107"/>
        <end position="108"/>
    </location>
    <ligand>
        <name>S-adenosyl-L-methionine</name>
        <dbReference type="ChEBI" id="CHEBI:59789"/>
    </ligand>
</feature>
<feature type="binding site" evidence="1">
    <location>
        <begin position="123"/>
        <end position="124"/>
    </location>
    <ligand>
        <name>S-adenosyl-L-methionine</name>
        <dbReference type="ChEBI" id="CHEBI:59789"/>
    </ligand>
</feature>
<feature type="binding site" evidence="1">
    <location>
        <position position="177"/>
    </location>
    <ligand>
        <name>S-adenosyl-L-methionine</name>
        <dbReference type="ChEBI" id="CHEBI:59789"/>
    </ligand>
</feature>
<organism>
    <name type="scientific">Histophilus somni (strain 2336)</name>
    <name type="common">Haemophilus somnus</name>
    <dbReference type="NCBI Taxonomy" id="228400"/>
    <lineage>
        <taxon>Bacteria</taxon>
        <taxon>Pseudomonadati</taxon>
        <taxon>Pseudomonadota</taxon>
        <taxon>Gammaproteobacteria</taxon>
        <taxon>Pasteurellales</taxon>
        <taxon>Pasteurellaceae</taxon>
        <taxon>Histophilus</taxon>
    </lineage>
</organism>
<sequence length="254" mass="28311">MVNQKIQLICETESAVQFTALCQQKGLIHDPNSYLALVQTKVEGQVRLELRKLDEPKLGAVYVDFVTGTMAHRRKFGGGRAEAVAKAVGIKGNYLPTVIDATAGLGRDAFVLAALGCKVRLVERHPVVHLLLQDGLKRAYADAEIGTMMQANMQLLDIAHIQELNSSEEGADVVYLDPMYPHKQKSALVKKEMRIFQHLIGADLDADMLLEPALLLAQKRAVVKRPDYADFLAKKTPHFSHQTKNHRFDIYLKT</sequence>
<reference key="1">
    <citation type="submission" date="2008-02" db="EMBL/GenBank/DDBJ databases">
        <title>Complete sequence of Haemophilus somnus 2336.</title>
        <authorList>
            <consortium name="US DOE Joint Genome Institute"/>
            <person name="Siddaramappa S."/>
            <person name="Duncan A.J."/>
            <person name="Challacombe J.F."/>
            <person name="Rainey D."/>
            <person name="Gillaspy A.F."/>
            <person name="Carson M."/>
            <person name="Gipson J."/>
            <person name="Gipson M."/>
            <person name="Bruce D."/>
            <person name="Detter J.C."/>
            <person name="Han C.S."/>
            <person name="Land M."/>
            <person name="Tapia R."/>
            <person name="Thompson L.S."/>
            <person name="Orvis J."/>
            <person name="Zaitshik J."/>
            <person name="Barnes G."/>
            <person name="Brettin T.S."/>
            <person name="Dyer D.W."/>
            <person name="Inzana T.J."/>
        </authorList>
    </citation>
    <scope>NUCLEOTIDE SEQUENCE [LARGE SCALE GENOMIC DNA]</scope>
    <source>
        <strain>2336</strain>
    </source>
</reference>
<name>RSMJ_HISS2</name>
<gene>
    <name evidence="1" type="primary">rsmJ</name>
    <name type="ordered locus">HSM_0177</name>
</gene>
<proteinExistence type="inferred from homology"/>
<keyword id="KW-0963">Cytoplasm</keyword>
<keyword id="KW-0489">Methyltransferase</keyword>
<keyword id="KW-0698">rRNA processing</keyword>
<keyword id="KW-0949">S-adenosyl-L-methionine</keyword>
<keyword id="KW-0808">Transferase</keyword>